<feature type="chain" id="PRO_1000123439" description="4-hydroxy-3-methylbut-2-en-1-yl diphosphate synthase (flavodoxin)">
    <location>
        <begin position="1"/>
        <end position="356"/>
    </location>
</feature>
<feature type="binding site" evidence="1">
    <location>
        <position position="264"/>
    </location>
    <ligand>
        <name>[4Fe-4S] cluster</name>
        <dbReference type="ChEBI" id="CHEBI:49883"/>
    </ligand>
</feature>
<feature type="binding site" evidence="1">
    <location>
        <position position="267"/>
    </location>
    <ligand>
        <name>[4Fe-4S] cluster</name>
        <dbReference type="ChEBI" id="CHEBI:49883"/>
    </ligand>
</feature>
<feature type="binding site" evidence="1">
    <location>
        <position position="299"/>
    </location>
    <ligand>
        <name>[4Fe-4S] cluster</name>
        <dbReference type="ChEBI" id="CHEBI:49883"/>
    </ligand>
</feature>
<feature type="binding site" evidence="1">
    <location>
        <position position="306"/>
    </location>
    <ligand>
        <name>[4Fe-4S] cluster</name>
        <dbReference type="ChEBI" id="CHEBI:49883"/>
    </ligand>
</feature>
<proteinExistence type="inferred from homology"/>
<gene>
    <name evidence="1" type="primary">ispG</name>
    <name type="ordered locus">Cla_1181</name>
</gene>
<organism>
    <name type="scientific">Campylobacter lari (strain RM2100 / D67 / ATCC BAA-1060)</name>
    <dbReference type="NCBI Taxonomy" id="306263"/>
    <lineage>
        <taxon>Bacteria</taxon>
        <taxon>Pseudomonadati</taxon>
        <taxon>Campylobacterota</taxon>
        <taxon>Epsilonproteobacteria</taxon>
        <taxon>Campylobacterales</taxon>
        <taxon>Campylobacteraceae</taxon>
        <taxon>Campylobacter</taxon>
    </lineage>
</organism>
<reference key="1">
    <citation type="journal article" date="2008" name="Foodborne Pathog. Dis.">
        <title>The complete genome sequence and analysis of the human pathogen Campylobacter lari.</title>
        <authorList>
            <person name="Miller W.G."/>
            <person name="Wang G."/>
            <person name="Binnewies T.T."/>
            <person name="Parker C.T."/>
        </authorList>
    </citation>
    <scope>NUCLEOTIDE SEQUENCE [LARGE SCALE GENOMIC DNA]</scope>
    <source>
        <strain>RM2100 / D67 / ATCC BAA-1060</strain>
    </source>
</reference>
<keyword id="KW-0004">4Fe-4S</keyword>
<keyword id="KW-0408">Iron</keyword>
<keyword id="KW-0411">Iron-sulfur</keyword>
<keyword id="KW-0414">Isoprene biosynthesis</keyword>
<keyword id="KW-0479">Metal-binding</keyword>
<keyword id="KW-0560">Oxidoreductase</keyword>
<keyword id="KW-1185">Reference proteome</keyword>
<evidence type="ECO:0000255" key="1">
    <source>
        <dbReference type="HAMAP-Rule" id="MF_00159"/>
    </source>
</evidence>
<protein>
    <recommendedName>
        <fullName evidence="1">4-hydroxy-3-methylbut-2-en-1-yl diphosphate synthase (flavodoxin)</fullName>
        <ecNumber evidence="1">1.17.7.3</ecNumber>
    </recommendedName>
    <alternativeName>
        <fullName evidence="1">1-hydroxy-2-methyl-2-(E)-butenyl 4-diphosphate synthase</fullName>
    </alternativeName>
</protein>
<accession>B9KD64</accession>
<dbReference type="EC" id="1.17.7.3" evidence="1"/>
<dbReference type="EMBL" id="CP000932">
    <property type="protein sequence ID" value="ACM64503.1"/>
    <property type="molecule type" value="Genomic_DNA"/>
</dbReference>
<dbReference type="RefSeq" id="WP_012661886.1">
    <property type="nucleotide sequence ID" value="NC_012039.1"/>
</dbReference>
<dbReference type="SMR" id="B9KD64"/>
<dbReference type="STRING" id="306263.Cla_1181"/>
<dbReference type="KEGG" id="cla:CLA_1181"/>
<dbReference type="PATRIC" id="fig|306263.5.peg.1170"/>
<dbReference type="eggNOG" id="COG0821">
    <property type="taxonomic scope" value="Bacteria"/>
</dbReference>
<dbReference type="HOGENOM" id="CLU_042258_0_0_7"/>
<dbReference type="UniPathway" id="UPA00056">
    <property type="reaction ID" value="UER00096"/>
</dbReference>
<dbReference type="Proteomes" id="UP000007727">
    <property type="component" value="Chromosome"/>
</dbReference>
<dbReference type="GO" id="GO:0051539">
    <property type="term" value="F:4 iron, 4 sulfur cluster binding"/>
    <property type="evidence" value="ECO:0007669"/>
    <property type="project" value="UniProtKB-UniRule"/>
</dbReference>
<dbReference type="GO" id="GO:0046429">
    <property type="term" value="F:4-hydroxy-3-methylbut-2-en-1-yl diphosphate synthase activity (ferredoxin)"/>
    <property type="evidence" value="ECO:0007669"/>
    <property type="project" value="UniProtKB-UniRule"/>
</dbReference>
<dbReference type="GO" id="GO:0141197">
    <property type="term" value="F:4-hydroxy-3-methylbut-2-enyl-diphosphate synthase activity (flavodoxin)"/>
    <property type="evidence" value="ECO:0007669"/>
    <property type="project" value="UniProtKB-EC"/>
</dbReference>
<dbReference type="GO" id="GO:0005506">
    <property type="term" value="F:iron ion binding"/>
    <property type="evidence" value="ECO:0007669"/>
    <property type="project" value="InterPro"/>
</dbReference>
<dbReference type="GO" id="GO:0019288">
    <property type="term" value="P:isopentenyl diphosphate biosynthetic process, methylerythritol 4-phosphate pathway"/>
    <property type="evidence" value="ECO:0007669"/>
    <property type="project" value="UniProtKB-UniRule"/>
</dbReference>
<dbReference type="GO" id="GO:0016114">
    <property type="term" value="P:terpenoid biosynthetic process"/>
    <property type="evidence" value="ECO:0007669"/>
    <property type="project" value="InterPro"/>
</dbReference>
<dbReference type="FunFam" id="3.20.20.20:FF:000001">
    <property type="entry name" value="4-hydroxy-3-methylbut-2-en-1-yl diphosphate synthase (flavodoxin)"/>
    <property type="match status" value="1"/>
</dbReference>
<dbReference type="Gene3D" id="3.20.20.20">
    <property type="entry name" value="Dihydropteroate synthase-like"/>
    <property type="match status" value="1"/>
</dbReference>
<dbReference type="Gene3D" id="3.30.413.10">
    <property type="entry name" value="Sulfite Reductase Hemoprotein, domain 1"/>
    <property type="match status" value="1"/>
</dbReference>
<dbReference type="HAMAP" id="MF_00159">
    <property type="entry name" value="IspG"/>
    <property type="match status" value="1"/>
</dbReference>
<dbReference type="InterPro" id="IPR011005">
    <property type="entry name" value="Dihydropteroate_synth-like_sf"/>
</dbReference>
<dbReference type="InterPro" id="IPR016425">
    <property type="entry name" value="IspG_bac"/>
</dbReference>
<dbReference type="InterPro" id="IPR004588">
    <property type="entry name" value="IspG_bac-typ"/>
</dbReference>
<dbReference type="InterPro" id="IPR045854">
    <property type="entry name" value="NO2/SO3_Rdtase_4Fe4S_sf"/>
</dbReference>
<dbReference type="NCBIfam" id="TIGR00612">
    <property type="entry name" value="ispG_gcpE"/>
    <property type="match status" value="1"/>
</dbReference>
<dbReference type="NCBIfam" id="NF001540">
    <property type="entry name" value="PRK00366.1"/>
    <property type="match status" value="1"/>
</dbReference>
<dbReference type="PANTHER" id="PTHR30454">
    <property type="entry name" value="4-HYDROXY-3-METHYLBUT-2-EN-1-YL DIPHOSPHATE SYNTHASE"/>
    <property type="match status" value="1"/>
</dbReference>
<dbReference type="PANTHER" id="PTHR30454:SF0">
    <property type="entry name" value="4-HYDROXY-3-METHYLBUT-2-EN-1-YL DIPHOSPHATE SYNTHASE (FERREDOXIN), CHLOROPLASTIC"/>
    <property type="match status" value="1"/>
</dbReference>
<dbReference type="Pfam" id="PF04551">
    <property type="entry name" value="GcpE"/>
    <property type="match status" value="1"/>
</dbReference>
<dbReference type="PIRSF" id="PIRSF004640">
    <property type="entry name" value="IspG"/>
    <property type="match status" value="1"/>
</dbReference>
<dbReference type="SUPFAM" id="SSF51717">
    <property type="entry name" value="Dihydropteroate synthetase-like"/>
    <property type="match status" value="1"/>
</dbReference>
<dbReference type="SUPFAM" id="SSF56014">
    <property type="entry name" value="Nitrite and sulphite reductase 4Fe-4S domain-like"/>
    <property type="match status" value="1"/>
</dbReference>
<comment type="function">
    <text evidence="1">Converts 2C-methyl-D-erythritol 2,4-cyclodiphosphate (ME-2,4cPP) into 1-hydroxy-2-methyl-2-(E)-butenyl 4-diphosphate.</text>
</comment>
<comment type="catalytic activity">
    <reaction evidence="1">
        <text>(2E)-4-hydroxy-3-methylbut-2-enyl diphosphate + oxidized [flavodoxin] + H2O + 2 H(+) = 2-C-methyl-D-erythritol 2,4-cyclic diphosphate + reduced [flavodoxin]</text>
        <dbReference type="Rhea" id="RHEA:43604"/>
        <dbReference type="Rhea" id="RHEA-COMP:10622"/>
        <dbReference type="Rhea" id="RHEA-COMP:10623"/>
        <dbReference type="ChEBI" id="CHEBI:15377"/>
        <dbReference type="ChEBI" id="CHEBI:15378"/>
        <dbReference type="ChEBI" id="CHEBI:57618"/>
        <dbReference type="ChEBI" id="CHEBI:58210"/>
        <dbReference type="ChEBI" id="CHEBI:58483"/>
        <dbReference type="ChEBI" id="CHEBI:128753"/>
        <dbReference type="EC" id="1.17.7.3"/>
    </reaction>
</comment>
<comment type="cofactor">
    <cofactor evidence="1">
        <name>[4Fe-4S] cluster</name>
        <dbReference type="ChEBI" id="CHEBI:49883"/>
    </cofactor>
    <text evidence="1">Binds 1 [4Fe-4S] cluster.</text>
</comment>
<comment type="pathway">
    <text evidence="1">Isoprenoid biosynthesis; isopentenyl diphosphate biosynthesis via DXP pathway; isopentenyl diphosphate from 1-deoxy-D-xylulose 5-phosphate: step 5/6.</text>
</comment>
<comment type="similarity">
    <text evidence="1">Belongs to the IspG family.</text>
</comment>
<name>ISPG_CAMLR</name>
<sequence>MEYQRYKTRQIKVGDVLIGGDAPISVQSMLFTKTRDVEGCLEQLNRLYFAGANIVRLACLDMADARALKEIKAKSPLPLIVDIHFNHKLAVFCAEFIDGVRINPGNIGSKENIKEVVQACKQRKIPIRIGVNHGSIEKQFSDKYGYNIEAMLGSALYNIKLLEDLDFFDIKISMKTSDVQNTIKAYEALRPLCDYPFHLGVTEAGTKFHSTVKSSIALGNLLLKGIGDTMRVSMTGELEEEIRVARAILQDSGVQKSGVNIISCPTCGRIQSDLIKAIKIVEEKTKHIKEPLNISVMGCVVNALGEAKGADVAIAFGKNQGLVIRHGEVVAKLKEDELVDRFLLEVEDEVKLREKD</sequence>